<dbReference type="EC" id="2.2.1.7" evidence="1"/>
<dbReference type="EMBL" id="CP000749">
    <property type="protein sequence ID" value="ABR70074.1"/>
    <property type="molecule type" value="Genomic_DNA"/>
</dbReference>
<dbReference type="SMR" id="A6VUE5"/>
<dbReference type="STRING" id="400668.Mmwyl1_1145"/>
<dbReference type="KEGG" id="mmw:Mmwyl1_1145"/>
<dbReference type="eggNOG" id="COG1154">
    <property type="taxonomic scope" value="Bacteria"/>
</dbReference>
<dbReference type="HOGENOM" id="CLU_009227_1_4_6"/>
<dbReference type="OrthoDB" id="9803371at2"/>
<dbReference type="UniPathway" id="UPA00064">
    <property type="reaction ID" value="UER00091"/>
</dbReference>
<dbReference type="GO" id="GO:0005829">
    <property type="term" value="C:cytosol"/>
    <property type="evidence" value="ECO:0007669"/>
    <property type="project" value="TreeGrafter"/>
</dbReference>
<dbReference type="GO" id="GO:0008661">
    <property type="term" value="F:1-deoxy-D-xylulose-5-phosphate synthase activity"/>
    <property type="evidence" value="ECO:0007669"/>
    <property type="project" value="UniProtKB-UniRule"/>
</dbReference>
<dbReference type="GO" id="GO:0000287">
    <property type="term" value="F:magnesium ion binding"/>
    <property type="evidence" value="ECO:0007669"/>
    <property type="project" value="UniProtKB-UniRule"/>
</dbReference>
<dbReference type="GO" id="GO:0030976">
    <property type="term" value="F:thiamine pyrophosphate binding"/>
    <property type="evidence" value="ECO:0007669"/>
    <property type="project" value="UniProtKB-UniRule"/>
</dbReference>
<dbReference type="GO" id="GO:0052865">
    <property type="term" value="P:1-deoxy-D-xylulose 5-phosphate biosynthetic process"/>
    <property type="evidence" value="ECO:0007669"/>
    <property type="project" value="UniProtKB-UniPathway"/>
</dbReference>
<dbReference type="GO" id="GO:0019288">
    <property type="term" value="P:isopentenyl diphosphate biosynthetic process, methylerythritol 4-phosphate pathway"/>
    <property type="evidence" value="ECO:0007669"/>
    <property type="project" value="TreeGrafter"/>
</dbReference>
<dbReference type="GO" id="GO:0016114">
    <property type="term" value="P:terpenoid biosynthetic process"/>
    <property type="evidence" value="ECO:0007669"/>
    <property type="project" value="UniProtKB-UniRule"/>
</dbReference>
<dbReference type="GO" id="GO:0009228">
    <property type="term" value="P:thiamine biosynthetic process"/>
    <property type="evidence" value="ECO:0007669"/>
    <property type="project" value="UniProtKB-UniRule"/>
</dbReference>
<dbReference type="CDD" id="cd02007">
    <property type="entry name" value="TPP_DXS"/>
    <property type="match status" value="1"/>
</dbReference>
<dbReference type="CDD" id="cd07033">
    <property type="entry name" value="TPP_PYR_DXS_TK_like"/>
    <property type="match status" value="1"/>
</dbReference>
<dbReference type="FunFam" id="3.40.50.970:FF:000005">
    <property type="entry name" value="1-deoxy-D-xylulose-5-phosphate synthase"/>
    <property type="match status" value="1"/>
</dbReference>
<dbReference type="Gene3D" id="3.40.50.920">
    <property type="match status" value="1"/>
</dbReference>
<dbReference type="Gene3D" id="3.40.50.970">
    <property type="match status" value="2"/>
</dbReference>
<dbReference type="HAMAP" id="MF_00315">
    <property type="entry name" value="DXP_synth"/>
    <property type="match status" value="1"/>
</dbReference>
<dbReference type="InterPro" id="IPR005477">
    <property type="entry name" value="Dxylulose-5-P_synthase"/>
</dbReference>
<dbReference type="InterPro" id="IPR029061">
    <property type="entry name" value="THDP-binding"/>
</dbReference>
<dbReference type="InterPro" id="IPR009014">
    <property type="entry name" value="Transketo_C/PFOR_II"/>
</dbReference>
<dbReference type="InterPro" id="IPR005475">
    <property type="entry name" value="Transketolase-like_Pyr-bd"/>
</dbReference>
<dbReference type="InterPro" id="IPR020826">
    <property type="entry name" value="Transketolase_BS"/>
</dbReference>
<dbReference type="InterPro" id="IPR033248">
    <property type="entry name" value="Transketolase_C"/>
</dbReference>
<dbReference type="NCBIfam" id="TIGR00204">
    <property type="entry name" value="dxs"/>
    <property type="match status" value="1"/>
</dbReference>
<dbReference type="NCBIfam" id="NF003933">
    <property type="entry name" value="PRK05444.2-2"/>
    <property type="match status" value="1"/>
</dbReference>
<dbReference type="PANTHER" id="PTHR43322">
    <property type="entry name" value="1-D-DEOXYXYLULOSE 5-PHOSPHATE SYNTHASE-RELATED"/>
    <property type="match status" value="1"/>
</dbReference>
<dbReference type="PANTHER" id="PTHR43322:SF5">
    <property type="entry name" value="1-DEOXY-D-XYLULOSE-5-PHOSPHATE SYNTHASE, CHLOROPLASTIC"/>
    <property type="match status" value="1"/>
</dbReference>
<dbReference type="Pfam" id="PF13292">
    <property type="entry name" value="DXP_synthase_N"/>
    <property type="match status" value="1"/>
</dbReference>
<dbReference type="Pfam" id="PF02779">
    <property type="entry name" value="Transket_pyr"/>
    <property type="match status" value="1"/>
</dbReference>
<dbReference type="Pfam" id="PF02780">
    <property type="entry name" value="Transketolase_C"/>
    <property type="match status" value="1"/>
</dbReference>
<dbReference type="SMART" id="SM00861">
    <property type="entry name" value="Transket_pyr"/>
    <property type="match status" value="1"/>
</dbReference>
<dbReference type="SUPFAM" id="SSF52518">
    <property type="entry name" value="Thiamin diphosphate-binding fold (THDP-binding)"/>
    <property type="match status" value="2"/>
</dbReference>
<dbReference type="SUPFAM" id="SSF52922">
    <property type="entry name" value="TK C-terminal domain-like"/>
    <property type="match status" value="1"/>
</dbReference>
<dbReference type="PROSITE" id="PS00802">
    <property type="entry name" value="TRANSKETOLASE_2"/>
    <property type="match status" value="1"/>
</dbReference>
<name>DXS_MARMS</name>
<accession>A6VUE5</accession>
<proteinExistence type="inferred from homology"/>
<evidence type="ECO:0000255" key="1">
    <source>
        <dbReference type="HAMAP-Rule" id="MF_00315"/>
    </source>
</evidence>
<comment type="function">
    <text evidence="1">Catalyzes the acyloin condensation reaction between C atoms 2 and 3 of pyruvate and glyceraldehyde 3-phosphate to yield 1-deoxy-D-xylulose-5-phosphate (DXP).</text>
</comment>
<comment type="catalytic activity">
    <reaction evidence="1">
        <text>D-glyceraldehyde 3-phosphate + pyruvate + H(+) = 1-deoxy-D-xylulose 5-phosphate + CO2</text>
        <dbReference type="Rhea" id="RHEA:12605"/>
        <dbReference type="ChEBI" id="CHEBI:15361"/>
        <dbReference type="ChEBI" id="CHEBI:15378"/>
        <dbReference type="ChEBI" id="CHEBI:16526"/>
        <dbReference type="ChEBI" id="CHEBI:57792"/>
        <dbReference type="ChEBI" id="CHEBI:59776"/>
        <dbReference type="EC" id="2.2.1.7"/>
    </reaction>
</comment>
<comment type="cofactor">
    <cofactor evidence="1">
        <name>Mg(2+)</name>
        <dbReference type="ChEBI" id="CHEBI:18420"/>
    </cofactor>
    <text evidence="1">Binds 1 Mg(2+) ion per subunit.</text>
</comment>
<comment type="cofactor">
    <cofactor evidence="1">
        <name>thiamine diphosphate</name>
        <dbReference type="ChEBI" id="CHEBI:58937"/>
    </cofactor>
    <text evidence="1">Binds 1 thiamine pyrophosphate per subunit.</text>
</comment>
<comment type="pathway">
    <text evidence="1">Metabolic intermediate biosynthesis; 1-deoxy-D-xylulose 5-phosphate biosynthesis; 1-deoxy-D-xylulose 5-phosphate from D-glyceraldehyde 3-phosphate and pyruvate: step 1/1.</text>
</comment>
<comment type="subunit">
    <text evidence="1">Homodimer.</text>
</comment>
<comment type="similarity">
    <text evidence="1">Belongs to the transketolase family. DXPS subfamily.</text>
</comment>
<sequence>MFEEIPTARPDTPLLDEVNSPADLRAFKKEQLPALVRELREFMLYSVGQTGGHFGAGLGVVELTVALHYLYNTPEDRIVWDVGHQAYPHKILTGRREALLNIRQENGISGFPKRDESEYDTFGVGHSSTSIGAALGMSLAARQLKTGRKAVAIIGDGAMSAGMSFEALNHAGDVKADMLVILNDNEMSISKPVGALSSYFARIWASKTYDNIREGGRKVFSGLPSALELARKAEEHMKGMVSPGMMFEELGFNYIGPIDGHDMDHLLTTIANLKDRKGPQFLHVITKKGKGFEPAEGDPIGYHAINKIEPDPKPNVDKSKLPKYCNVFGKWVCDAAEQDDKLVAITPAMKEGSDLIEFADRFPERYFDVAIAEQHAVTLAAGMACDGIKPVVAIYSTFLQRAYDQLIHDVALQNLDVLFAIDRAGLVGEDGPTHAGVYDLSYLRCIPNMVVMAPSDEDECRKMLQTGYEYKGPAAVRYPRGTGQGVDIESTLSTLKIGKSRTLRTGQSGIVICGFGRPTYDALKAANTLDATLLDMRFVKPIDEETLLTHRDAKLIVTVEENAIMGGAGSAVSELLIANNINIPTLHLGLPDQYEEHASHASMLKRVGLDADGIQKSIELKLTHL</sequence>
<reference key="1">
    <citation type="submission" date="2007-06" db="EMBL/GenBank/DDBJ databases">
        <title>Complete sequence of Marinomonas sp. MWYL1.</title>
        <authorList>
            <consortium name="US DOE Joint Genome Institute"/>
            <person name="Copeland A."/>
            <person name="Lucas S."/>
            <person name="Lapidus A."/>
            <person name="Barry K."/>
            <person name="Glavina del Rio T."/>
            <person name="Dalin E."/>
            <person name="Tice H."/>
            <person name="Pitluck S."/>
            <person name="Kiss H."/>
            <person name="Brettin T."/>
            <person name="Bruce D."/>
            <person name="Detter J.C."/>
            <person name="Han C."/>
            <person name="Schmutz J."/>
            <person name="Larimer F."/>
            <person name="Land M."/>
            <person name="Hauser L."/>
            <person name="Kyrpides N."/>
            <person name="Kim E."/>
            <person name="Johnston A.W.B."/>
            <person name="Todd J.D."/>
            <person name="Rogers R."/>
            <person name="Wexler M."/>
            <person name="Bond P.L."/>
            <person name="Li Y."/>
            <person name="Richardson P."/>
        </authorList>
    </citation>
    <scope>NUCLEOTIDE SEQUENCE [LARGE SCALE GENOMIC DNA]</scope>
    <source>
        <strain>MWYL1</strain>
    </source>
</reference>
<gene>
    <name evidence="1" type="primary">dxs</name>
    <name type="ordered locus">Mmwyl1_1145</name>
</gene>
<feature type="chain" id="PRO_1000132939" description="1-deoxy-D-xylulose-5-phosphate synthase">
    <location>
        <begin position="1"/>
        <end position="625"/>
    </location>
</feature>
<feature type="binding site" evidence="1">
    <location>
        <position position="84"/>
    </location>
    <ligand>
        <name>thiamine diphosphate</name>
        <dbReference type="ChEBI" id="CHEBI:58937"/>
    </ligand>
</feature>
<feature type="binding site" evidence="1">
    <location>
        <begin position="125"/>
        <end position="127"/>
    </location>
    <ligand>
        <name>thiamine diphosphate</name>
        <dbReference type="ChEBI" id="CHEBI:58937"/>
    </ligand>
</feature>
<feature type="binding site" evidence="1">
    <location>
        <position position="156"/>
    </location>
    <ligand>
        <name>Mg(2+)</name>
        <dbReference type="ChEBI" id="CHEBI:18420"/>
    </ligand>
</feature>
<feature type="binding site" evidence="1">
    <location>
        <begin position="157"/>
        <end position="158"/>
    </location>
    <ligand>
        <name>thiamine diphosphate</name>
        <dbReference type="ChEBI" id="CHEBI:58937"/>
    </ligand>
</feature>
<feature type="binding site" evidence="1">
    <location>
        <position position="185"/>
    </location>
    <ligand>
        <name>Mg(2+)</name>
        <dbReference type="ChEBI" id="CHEBI:18420"/>
    </ligand>
</feature>
<feature type="binding site" evidence="1">
    <location>
        <position position="185"/>
    </location>
    <ligand>
        <name>thiamine diphosphate</name>
        <dbReference type="ChEBI" id="CHEBI:58937"/>
    </ligand>
</feature>
<feature type="binding site" evidence="1">
    <location>
        <position position="292"/>
    </location>
    <ligand>
        <name>thiamine diphosphate</name>
        <dbReference type="ChEBI" id="CHEBI:58937"/>
    </ligand>
</feature>
<feature type="binding site" evidence="1">
    <location>
        <position position="373"/>
    </location>
    <ligand>
        <name>thiamine diphosphate</name>
        <dbReference type="ChEBI" id="CHEBI:58937"/>
    </ligand>
</feature>
<organism>
    <name type="scientific">Marinomonas sp. (strain MWYL1)</name>
    <dbReference type="NCBI Taxonomy" id="400668"/>
    <lineage>
        <taxon>Bacteria</taxon>
        <taxon>Pseudomonadati</taxon>
        <taxon>Pseudomonadota</taxon>
        <taxon>Gammaproteobacteria</taxon>
        <taxon>Oceanospirillales</taxon>
        <taxon>Oceanospirillaceae</taxon>
        <taxon>Marinomonas</taxon>
    </lineage>
</organism>
<keyword id="KW-0414">Isoprene biosynthesis</keyword>
<keyword id="KW-0460">Magnesium</keyword>
<keyword id="KW-0479">Metal-binding</keyword>
<keyword id="KW-0784">Thiamine biosynthesis</keyword>
<keyword id="KW-0786">Thiamine pyrophosphate</keyword>
<keyword id="KW-0808">Transferase</keyword>
<protein>
    <recommendedName>
        <fullName evidence="1">1-deoxy-D-xylulose-5-phosphate synthase</fullName>
        <ecNumber evidence="1">2.2.1.7</ecNumber>
    </recommendedName>
    <alternativeName>
        <fullName evidence="1">1-deoxyxylulose-5-phosphate synthase</fullName>
        <shortName evidence="1">DXP synthase</shortName>
        <shortName evidence="1">DXPS</shortName>
    </alternativeName>
</protein>